<reference key="1">
    <citation type="journal article" date="2011" name="Proc. Natl. Acad. Sci. U.S.A.">
        <title>Genomic anatomy of Escherichia coli O157:H7 outbreaks.</title>
        <authorList>
            <person name="Eppinger M."/>
            <person name="Mammel M.K."/>
            <person name="Leclerc J.E."/>
            <person name="Ravel J."/>
            <person name="Cebula T.A."/>
        </authorList>
    </citation>
    <scope>NUCLEOTIDE SEQUENCE [LARGE SCALE GENOMIC DNA]</scope>
    <source>
        <strain>EC4115 / EHEC</strain>
    </source>
</reference>
<proteinExistence type="inferred from homology"/>
<accession>B5Z059</accession>
<organism>
    <name type="scientific">Escherichia coli O157:H7 (strain EC4115 / EHEC)</name>
    <dbReference type="NCBI Taxonomy" id="444450"/>
    <lineage>
        <taxon>Bacteria</taxon>
        <taxon>Pseudomonadati</taxon>
        <taxon>Pseudomonadota</taxon>
        <taxon>Gammaproteobacteria</taxon>
        <taxon>Enterobacterales</taxon>
        <taxon>Enterobacteriaceae</taxon>
        <taxon>Escherichia</taxon>
    </lineage>
</organism>
<name>ARGE_ECO5E</name>
<gene>
    <name evidence="1" type="primary">argE</name>
    <name type="ordered locus">ECH74115_5417</name>
</gene>
<keyword id="KW-0028">Amino-acid biosynthesis</keyword>
<keyword id="KW-0055">Arginine biosynthesis</keyword>
<keyword id="KW-0170">Cobalt</keyword>
<keyword id="KW-0963">Cytoplasm</keyword>
<keyword id="KW-0378">Hydrolase</keyword>
<keyword id="KW-0479">Metal-binding</keyword>
<keyword id="KW-0862">Zinc</keyword>
<dbReference type="EC" id="3.5.1.16" evidence="1"/>
<dbReference type="EMBL" id="CP001164">
    <property type="protein sequence ID" value="ACI37744.1"/>
    <property type="molecule type" value="Genomic_DNA"/>
</dbReference>
<dbReference type="RefSeq" id="WP_001301638.1">
    <property type="nucleotide sequence ID" value="NC_011353.1"/>
</dbReference>
<dbReference type="SMR" id="B5Z059"/>
<dbReference type="MEROPS" id="M20.974"/>
<dbReference type="KEGG" id="ecf:ECH74115_5417"/>
<dbReference type="HOGENOM" id="CLU_021802_2_4_6"/>
<dbReference type="UniPathway" id="UPA00068">
    <property type="reaction ID" value="UER00110"/>
</dbReference>
<dbReference type="GO" id="GO:0005737">
    <property type="term" value="C:cytoplasm"/>
    <property type="evidence" value="ECO:0007669"/>
    <property type="project" value="UniProtKB-SubCell"/>
</dbReference>
<dbReference type="GO" id="GO:0008777">
    <property type="term" value="F:acetylornithine deacetylase activity"/>
    <property type="evidence" value="ECO:0007669"/>
    <property type="project" value="UniProtKB-UniRule"/>
</dbReference>
<dbReference type="GO" id="GO:0008270">
    <property type="term" value="F:zinc ion binding"/>
    <property type="evidence" value="ECO:0007669"/>
    <property type="project" value="UniProtKB-UniRule"/>
</dbReference>
<dbReference type="GO" id="GO:0006526">
    <property type="term" value="P:L-arginine biosynthetic process"/>
    <property type="evidence" value="ECO:0007669"/>
    <property type="project" value="UniProtKB-UniRule"/>
</dbReference>
<dbReference type="CDD" id="cd03894">
    <property type="entry name" value="M20_ArgE"/>
    <property type="match status" value="1"/>
</dbReference>
<dbReference type="FunFam" id="3.30.70.360:FF:000003">
    <property type="entry name" value="Acetylornithine deacetylase"/>
    <property type="match status" value="1"/>
</dbReference>
<dbReference type="Gene3D" id="3.30.70.360">
    <property type="match status" value="1"/>
</dbReference>
<dbReference type="Gene3D" id="3.40.630.10">
    <property type="entry name" value="Zn peptidases"/>
    <property type="match status" value="1"/>
</dbReference>
<dbReference type="HAMAP" id="MF_01108">
    <property type="entry name" value="ArgE"/>
    <property type="match status" value="1"/>
</dbReference>
<dbReference type="InterPro" id="IPR010169">
    <property type="entry name" value="AcOrn-deacetyl"/>
</dbReference>
<dbReference type="InterPro" id="IPR001261">
    <property type="entry name" value="ArgE/DapE_CS"/>
</dbReference>
<dbReference type="InterPro" id="IPR036264">
    <property type="entry name" value="Bact_exopeptidase_dim_dom"/>
</dbReference>
<dbReference type="InterPro" id="IPR002933">
    <property type="entry name" value="Peptidase_M20"/>
</dbReference>
<dbReference type="InterPro" id="IPR011650">
    <property type="entry name" value="Peptidase_M20_dimer"/>
</dbReference>
<dbReference type="InterPro" id="IPR050072">
    <property type="entry name" value="Peptidase_M20A"/>
</dbReference>
<dbReference type="NCBIfam" id="TIGR01892">
    <property type="entry name" value="AcOrn-deacetyl"/>
    <property type="match status" value="1"/>
</dbReference>
<dbReference type="NCBIfam" id="NF003474">
    <property type="entry name" value="PRK05111.1"/>
    <property type="match status" value="1"/>
</dbReference>
<dbReference type="PANTHER" id="PTHR43808">
    <property type="entry name" value="ACETYLORNITHINE DEACETYLASE"/>
    <property type="match status" value="1"/>
</dbReference>
<dbReference type="PANTHER" id="PTHR43808:SF1">
    <property type="entry name" value="ACETYLORNITHINE DEACETYLASE"/>
    <property type="match status" value="1"/>
</dbReference>
<dbReference type="Pfam" id="PF07687">
    <property type="entry name" value="M20_dimer"/>
    <property type="match status" value="1"/>
</dbReference>
<dbReference type="Pfam" id="PF01546">
    <property type="entry name" value="Peptidase_M20"/>
    <property type="match status" value="1"/>
</dbReference>
<dbReference type="SUPFAM" id="SSF55031">
    <property type="entry name" value="Bacterial exopeptidase dimerisation domain"/>
    <property type="match status" value="1"/>
</dbReference>
<dbReference type="SUPFAM" id="SSF53187">
    <property type="entry name" value="Zn-dependent exopeptidases"/>
    <property type="match status" value="1"/>
</dbReference>
<dbReference type="PROSITE" id="PS00758">
    <property type="entry name" value="ARGE_DAPE_CPG2_1"/>
    <property type="match status" value="1"/>
</dbReference>
<dbReference type="PROSITE" id="PS00759">
    <property type="entry name" value="ARGE_DAPE_CPG2_2"/>
    <property type="match status" value="1"/>
</dbReference>
<evidence type="ECO:0000255" key="1">
    <source>
        <dbReference type="HAMAP-Rule" id="MF_01108"/>
    </source>
</evidence>
<protein>
    <recommendedName>
        <fullName evidence="1">Acetylornithine deacetylase</fullName>
        <shortName evidence="1">AO</shortName>
        <shortName evidence="1">Acetylornithinase</shortName>
        <ecNumber evidence="1">3.5.1.16</ecNumber>
    </recommendedName>
    <alternativeName>
        <fullName evidence="1">N-acetylornithinase</fullName>
        <shortName evidence="1">NAO</shortName>
    </alternativeName>
</protein>
<comment type="function">
    <text evidence="1">Catalyzes the hydrolysis of the amide bond of N(2)-acetylated L-amino acids. Cleaves the acetyl group from N-acetyl-L-ornithine to form L-ornithine, an intermediate in L-arginine biosynthesis pathway, and a branchpoint in the synthesis of polyamines.</text>
</comment>
<comment type="catalytic activity">
    <reaction evidence="1">
        <text>N(2)-acetyl-L-ornithine + H2O = L-ornithine + acetate</text>
        <dbReference type="Rhea" id="RHEA:15941"/>
        <dbReference type="ChEBI" id="CHEBI:15377"/>
        <dbReference type="ChEBI" id="CHEBI:30089"/>
        <dbReference type="ChEBI" id="CHEBI:46911"/>
        <dbReference type="ChEBI" id="CHEBI:57805"/>
        <dbReference type="EC" id="3.5.1.16"/>
    </reaction>
</comment>
<comment type="cofactor">
    <cofactor evidence="1">
        <name>Zn(2+)</name>
        <dbReference type="ChEBI" id="CHEBI:29105"/>
    </cofactor>
    <cofactor evidence="1">
        <name>Co(2+)</name>
        <dbReference type="ChEBI" id="CHEBI:48828"/>
    </cofactor>
    <text evidence="1">Binds 2 Zn(2+) or Co(2+) ions per subunit.</text>
</comment>
<comment type="cofactor">
    <cofactor evidence="1">
        <name>glutathione</name>
        <dbReference type="ChEBI" id="CHEBI:57925"/>
    </cofactor>
</comment>
<comment type="pathway">
    <text evidence="1">Amino-acid biosynthesis; L-arginine biosynthesis; L-ornithine from N(2)-acetyl-L-ornithine (linear): step 1/1.</text>
</comment>
<comment type="subunit">
    <text evidence="1">Homodimer.</text>
</comment>
<comment type="subcellular location">
    <subcellularLocation>
        <location evidence="1">Cytoplasm</location>
    </subcellularLocation>
</comment>
<comment type="similarity">
    <text evidence="1">Belongs to the peptidase M20A family. ArgE subfamily.</text>
</comment>
<feature type="chain" id="PRO_1000137062" description="Acetylornithine deacetylase">
    <location>
        <begin position="1"/>
        <end position="383"/>
    </location>
</feature>
<feature type="active site" evidence="1">
    <location>
        <position position="82"/>
    </location>
</feature>
<feature type="active site" evidence="1">
    <location>
        <position position="144"/>
    </location>
</feature>
<feature type="binding site" evidence="1">
    <location>
        <position position="80"/>
    </location>
    <ligand>
        <name>Zn(2+)</name>
        <dbReference type="ChEBI" id="CHEBI:29105"/>
        <label>1</label>
    </ligand>
</feature>
<feature type="binding site" evidence="1">
    <location>
        <position position="112"/>
    </location>
    <ligand>
        <name>Zn(2+)</name>
        <dbReference type="ChEBI" id="CHEBI:29105"/>
        <label>1</label>
    </ligand>
</feature>
<feature type="binding site" evidence="1">
    <location>
        <position position="112"/>
    </location>
    <ligand>
        <name>Zn(2+)</name>
        <dbReference type="ChEBI" id="CHEBI:29105"/>
        <label>2</label>
    </ligand>
</feature>
<feature type="binding site" evidence="1">
    <location>
        <position position="145"/>
    </location>
    <ligand>
        <name>Zn(2+)</name>
        <dbReference type="ChEBI" id="CHEBI:29105"/>
        <label>2</label>
    </ligand>
</feature>
<feature type="binding site" evidence="1">
    <location>
        <position position="169"/>
    </location>
    <ligand>
        <name>Zn(2+)</name>
        <dbReference type="ChEBI" id="CHEBI:29105"/>
        <label>1</label>
    </ligand>
</feature>
<feature type="binding site" evidence="1">
    <location>
        <position position="355"/>
    </location>
    <ligand>
        <name>Zn(2+)</name>
        <dbReference type="ChEBI" id="CHEBI:29105"/>
        <label>2</label>
    </ligand>
</feature>
<sequence>MKNKLPPFIEIYRALIATPSISATEEALDQSNADLITLLADWFKDLGFNVEVQPVPGTRNKFNMLASTGQGAGGLLLAGHTDTVPFDDGRWTRDPFTLTEHDGKLYGLGTADMKGFFAFILDALRDVDVTKLKKPLYILATADEETSMAGARYFAETTALRPDCAIIGEPTSLQPVRAHKGHISNAIRIQGQSGHSSDPARGVNAIELMHDAIGHILQLRDNLKERYHYEAFTVPYPTLNLGHIHGGDASNRICAWCELHMDIRPLPGMTLNELNGLLNDALAPVSERWPGRLTVDELHPPIPGYECPPNHQLVEVVEKLLGAKTEVVNYCTEAPFIQTLCPTLVLGPGSINQAHQPDEYLETRFIKPTRELITQVIHHFCWH</sequence>